<dbReference type="EC" id="1.14.13.69" evidence="2 4"/>
<dbReference type="EMBL" id="AJ012090">
    <property type="protein sequence ID" value="CAA09912.1"/>
    <property type="molecule type" value="Genomic_DNA"/>
</dbReference>
<dbReference type="EMBL" id="CP000782">
    <property type="protein sequence ID" value="ABS70069.1"/>
    <property type="molecule type" value="Genomic_DNA"/>
</dbReference>
<dbReference type="SMR" id="Q9ZET6"/>
<dbReference type="KEGG" id="xau:Xaut_4858"/>
<dbReference type="eggNOG" id="ENOG503301Y">
    <property type="taxonomic scope" value="Bacteria"/>
</dbReference>
<dbReference type="HOGENOM" id="CLU_178293_0_0_5"/>
<dbReference type="OrthoDB" id="3478662at2"/>
<dbReference type="BioCyc" id="MetaCyc:MONOMER-13292"/>
<dbReference type="Proteomes" id="UP000002417">
    <property type="component" value="Plasmid pXAUT01"/>
</dbReference>
<dbReference type="GO" id="GO:0005737">
    <property type="term" value="C:cytoplasm"/>
    <property type="evidence" value="ECO:0007669"/>
    <property type="project" value="UniProtKB-SubCell"/>
</dbReference>
<dbReference type="GO" id="GO:0018645">
    <property type="term" value="F:alkene monooxygenase activity"/>
    <property type="evidence" value="ECO:0007669"/>
    <property type="project" value="UniProtKB-EC"/>
</dbReference>
<dbReference type="CDD" id="cd17042">
    <property type="entry name" value="Ubl_TmoB"/>
    <property type="match status" value="1"/>
</dbReference>
<dbReference type="Gene3D" id="3.10.20.270">
    <property type="entry name" value="TmoB-like"/>
    <property type="match status" value="1"/>
</dbReference>
<dbReference type="InterPro" id="IPR036713">
    <property type="entry name" value="TmoB-like_sf"/>
</dbReference>
<dbReference type="InterPro" id="IPR009355">
    <property type="entry name" value="Toluene_mOase_B"/>
</dbReference>
<dbReference type="Pfam" id="PF06234">
    <property type="entry name" value="TmoB"/>
    <property type="match status" value="1"/>
</dbReference>
<dbReference type="SUPFAM" id="SSF110814">
    <property type="entry name" value="TmoB-like"/>
    <property type="match status" value="1"/>
</dbReference>
<accession>Q9ZET6</accession>
<gene>
    <name evidence="5 9" type="primary">xamoB</name>
    <name evidence="5" type="synonym">aamB</name>
    <name evidence="8" type="ordered locus">Xaut_4858</name>
</gene>
<sequence>MSLFPIVGRFVGDFVPHLVAVDTSDTIDQIAEKVAVHTVGRRLPPDPTATGYEVLLDGETLDGGATLEAIMTKREMLPLQWFDVRFKK</sequence>
<protein>
    <recommendedName>
        <fullName evidence="5">Alkene monooxygenase system, oxygenase component subunit gamma</fullName>
        <ecNumber evidence="2 4">1.14.13.69</ecNumber>
    </recommendedName>
</protein>
<reference key="1">
    <citation type="journal article" date="1999" name="Appl. Environ. Microbiol.">
        <title>The alkene monooxygenase from Xanthobacter strain Py2 is closely related to aromatic monooxygenases and catalyzes aromatic monohydroxylation of benzene, toluene, and phenol.</title>
        <authorList>
            <person name="Zhou N.Y."/>
            <person name="Jenkins A."/>
            <person name="Chan Kwo Chion C.K."/>
            <person name="Leak D.J."/>
        </authorList>
    </citation>
    <scope>NUCLEOTIDE SEQUENCE [GENOMIC DNA]</scope>
    <scope>FUNCTION</scope>
    <source>
        <strain evidence="9">ATCC BAA-1158 / Py2</strain>
    </source>
</reference>
<reference key="2">
    <citation type="submission" date="2007-07" db="EMBL/GenBank/DDBJ databases">
        <title>Complete sequence of plasmid pXAUT01 of Xanthobacter autotrophicus Py2.</title>
        <authorList>
            <consortium name="US DOE Joint Genome Institute"/>
            <person name="Copeland A."/>
            <person name="Lucas S."/>
            <person name="Lapidus A."/>
            <person name="Barry K."/>
            <person name="Glavina del Rio T."/>
            <person name="Hammon N."/>
            <person name="Israni S."/>
            <person name="Dalin E."/>
            <person name="Tice H."/>
            <person name="Pitluck S."/>
            <person name="Sims D."/>
            <person name="Brettin T."/>
            <person name="Bruce D."/>
            <person name="Detter J.C."/>
            <person name="Han C."/>
            <person name="Tapia R."/>
            <person name="Brainard J."/>
            <person name="Schmutz J."/>
            <person name="Larimer F."/>
            <person name="Land M."/>
            <person name="Hauser L."/>
            <person name="Kyrpides N."/>
            <person name="Kim E."/>
            <person name="Ensigns S.A."/>
            <person name="Richardson P."/>
        </authorList>
    </citation>
    <scope>NUCLEOTIDE SEQUENCE [LARGE SCALE GENOMIC DNA]</scope>
    <source>
        <strain evidence="10">ATCC BAA-1158 / Py2</strain>
        <plasmid evidence="8">pXAUT01</plasmid>
    </source>
</reference>
<reference key="3">
    <citation type="journal article" date="1992" name="Appl. Environ. Microbiol.">
        <title>Cometabolic degradation of chlorinated alkenes by alkene monooxygenase in a propylene-grown Xanthobacter strain.</title>
        <authorList>
            <person name="Ensign S.A."/>
            <person name="Hyman M.R."/>
            <person name="Arp D.J."/>
        </authorList>
    </citation>
    <scope>FUNCTION</scope>
    <scope>CATALYTIC ACTIVITY</scope>
    <scope>ACTIVITY REGULATION</scope>
    <scope>SUBSTRATE SPECIFICITY</scope>
    <source>
        <strain>ATCC BAA-1158 / Py2</strain>
    </source>
</reference>
<reference key="4">
    <citation type="journal article" date="1996" name="Appl. Environ. Microbiol.">
        <title>Aliphatic and chlorinated alkenes and epoxides as inducers of alkene monooxygenase and epoxidase activities in Xanthobacter strain Py2.</title>
        <authorList>
            <person name="Ensign S.A."/>
        </authorList>
    </citation>
    <scope>INDUCTION</scope>
    <source>
        <strain>ATCC BAA-1158 / Py2</strain>
    </source>
</reference>
<reference key="5">
    <citation type="journal article" date="1997" name="J. Biol. Chem.">
        <title>Alkene monooxygenase from Xanthobacter strain Py2. Purification and characterization of a four-component system central to the bacterial metabolism of aliphatic alkenes.</title>
        <authorList>
            <person name="Small F.J."/>
            <person name="Ensign S.A."/>
        </authorList>
    </citation>
    <scope>FUNCTION</scope>
    <scope>CATALYTIC ACTIVITY</scope>
    <scope>SUBCELLULAR LOCATION</scope>
    <scope>SUBUNIT</scope>
    <source>
        <strain>ATCC BAA-1158 / Py2</strain>
    </source>
</reference>
<feature type="chain" id="PRO_0000442692" description="Alkene monooxygenase system, oxygenase component subunit gamma">
    <location>
        <begin position="1"/>
        <end position="88"/>
    </location>
</feature>
<keyword id="KW-0963">Cytoplasm</keyword>
<keyword id="KW-0503">Monooxygenase</keyword>
<keyword id="KW-0520">NAD</keyword>
<keyword id="KW-0560">Oxidoreductase</keyword>
<keyword id="KW-0614">Plasmid</keyword>
<keyword id="KW-1185">Reference proteome</keyword>
<proteinExistence type="evidence at protein level"/>
<geneLocation type="plasmid" evidence="8 10">
    <name>pXAUT01</name>
</geneLocation>
<name>XAMOB_XANP2</name>
<organism>
    <name type="scientific">Xanthobacter autotrophicus (strain ATCC BAA-1158 / Py2)</name>
    <dbReference type="NCBI Taxonomy" id="78245"/>
    <lineage>
        <taxon>Bacteria</taxon>
        <taxon>Pseudomonadati</taxon>
        <taxon>Pseudomonadota</taxon>
        <taxon>Alphaproteobacteria</taxon>
        <taxon>Hyphomicrobiales</taxon>
        <taxon>Xanthobacteraceae</taxon>
        <taxon>Xanthobacter</taxon>
    </lineage>
</organism>
<comment type="function">
    <text evidence="1 2 4">Component of the alkene monooxygenase multicomponent enzyme system which catalyzes the O2- and NADH-dependent epoxidation of short chain (C2 to C6) alkenes to their corresponding epoxides (PubMed:10103255, PubMed:1444418, PubMed:9312093). Also able to catalyze the oxidation of a number of chlorinated alkenes, including trichloroethylene, cis- and trans-1,2-dichloroethylene, vinyl chloride, 1-chloropropylene, 1,3-dichloropropylene and 2,3-dichloropropylene (PubMed:1444418).</text>
</comment>
<comment type="catalytic activity">
    <reaction evidence="2 4">
        <text>propene + NADH + O2 + H(+) = 1,2-epoxypropane + NAD(+) + H2O</text>
        <dbReference type="Rhea" id="RHEA:11792"/>
        <dbReference type="ChEBI" id="CHEBI:15377"/>
        <dbReference type="ChEBI" id="CHEBI:15378"/>
        <dbReference type="ChEBI" id="CHEBI:15379"/>
        <dbReference type="ChEBI" id="CHEBI:16052"/>
        <dbReference type="ChEBI" id="CHEBI:38685"/>
        <dbReference type="ChEBI" id="CHEBI:57540"/>
        <dbReference type="ChEBI" id="CHEBI:57945"/>
        <dbReference type="EC" id="1.14.13.69"/>
    </reaction>
</comment>
<comment type="activity regulation">
    <text evidence="2">Inhibited by propyne.</text>
</comment>
<comment type="subunit">
    <text evidence="4">The alkene monooxygenase multicomponent enzyme system is composed of an electron transfer component and a monooxygenase component interacting with the effector protein XamoD. The electron transfer component is composed of a ferredoxin reductase (XamoF) and a ferredoxin (XamoC), and the monooxygenase component is formed by a heterohexamer (dimer of heterotrimers) of two alpha subunits (XamoA), two beta subunits (XamoE) and two gamma subunits (XamoB).</text>
</comment>
<comment type="subcellular location">
    <subcellularLocation>
        <location evidence="7">Cytoplasm</location>
    </subcellularLocation>
</comment>
<comment type="induction">
    <text evidence="3">Induced during growth on aliphatic alkenes (such as propylene, ethylene and 1-butylene), epoxides (such as propylene oxide and 1,2-epoxybutane) and chlorinated alkenes and epoxides (such as vinyl chloride, cis- and trans-1,2-dichloroethylene, 1-chloropropylene, 1,3-dichloropropylene, epichlorohydrin, and epifluorohydrin). Repressed during growth on other carbon sources.</text>
</comment>
<comment type="similarity">
    <text evidence="6">Belongs to the TmoB/XamoB family.</text>
</comment>
<evidence type="ECO:0000269" key="1">
    <source>
    </source>
</evidence>
<evidence type="ECO:0000269" key="2">
    <source>
    </source>
</evidence>
<evidence type="ECO:0000269" key="3">
    <source>
    </source>
</evidence>
<evidence type="ECO:0000269" key="4">
    <source>
    </source>
</evidence>
<evidence type="ECO:0000303" key="5">
    <source>
    </source>
</evidence>
<evidence type="ECO:0000305" key="6"/>
<evidence type="ECO:0000305" key="7">
    <source>
    </source>
</evidence>
<evidence type="ECO:0000312" key="8">
    <source>
        <dbReference type="EMBL" id="ABS70069.1"/>
    </source>
</evidence>
<evidence type="ECO:0000312" key="9">
    <source>
        <dbReference type="EMBL" id="CAA09912.1"/>
    </source>
</evidence>
<evidence type="ECO:0000312" key="10">
    <source>
        <dbReference type="Proteomes" id="UP000002417"/>
    </source>
</evidence>